<comment type="function">
    <text>Can catalyze the hydrolysis of ATP in the presence of single-stranded DNA, the ATP-dependent uptake of single-stranded DNA by duplex DNA, and the ATP-dependent hybridization of homologous single-stranded DNAs. It interacts with LexA causing its activation and leading to its autocatalytic cleavage.</text>
</comment>
<comment type="subcellular location">
    <subcellularLocation>
        <location evidence="1">Cytoplasm</location>
    </subcellularLocation>
</comment>
<comment type="similarity">
    <text evidence="1">Belongs to the RecA family.</text>
</comment>
<evidence type="ECO:0000255" key="1">
    <source>
        <dbReference type="HAMAP-Rule" id="MF_00268"/>
    </source>
</evidence>
<evidence type="ECO:0000256" key="2">
    <source>
        <dbReference type="SAM" id="MobiDB-lite"/>
    </source>
</evidence>
<accession>P42438</accession>
<proteinExistence type="inferred from homology"/>
<protein>
    <recommendedName>
        <fullName evidence="1">Protein RecA</fullName>
    </recommendedName>
    <alternativeName>
        <fullName evidence="1">Recombinase A</fullName>
    </alternativeName>
</protein>
<name>RECA_ACIAD</name>
<organism>
    <name type="scientific">Acinetobacter baylyi (strain ATCC 33305 / BD413 / ADP1)</name>
    <dbReference type="NCBI Taxonomy" id="62977"/>
    <lineage>
        <taxon>Bacteria</taxon>
        <taxon>Pseudomonadati</taxon>
        <taxon>Pseudomonadota</taxon>
        <taxon>Gammaproteobacteria</taxon>
        <taxon>Moraxellales</taxon>
        <taxon>Moraxellaceae</taxon>
        <taxon>Acinetobacter</taxon>
    </lineage>
</organism>
<dbReference type="EMBL" id="L26100">
    <property type="protein sequence ID" value="AAC27115.1"/>
    <property type="molecule type" value="Genomic_DNA"/>
</dbReference>
<dbReference type="EMBL" id="CR543861">
    <property type="protein sequence ID" value="CAG68251.1"/>
    <property type="molecule type" value="Genomic_DNA"/>
</dbReference>
<dbReference type="PIR" id="I39509">
    <property type="entry name" value="I39509"/>
</dbReference>
<dbReference type="RefSeq" id="WP_004925639.1">
    <property type="nucleotide sequence ID" value="NC_005966.1"/>
</dbReference>
<dbReference type="SMR" id="P42438"/>
<dbReference type="STRING" id="202950.GCA_001485005_01142"/>
<dbReference type="GeneID" id="45233800"/>
<dbReference type="KEGG" id="aci:ACIAD1385"/>
<dbReference type="eggNOG" id="COG0468">
    <property type="taxonomic scope" value="Bacteria"/>
</dbReference>
<dbReference type="HOGENOM" id="CLU_040469_3_2_6"/>
<dbReference type="OrthoDB" id="9776733at2"/>
<dbReference type="BioCyc" id="ASP62977:ACIAD_RS06390-MONOMER"/>
<dbReference type="Proteomes" id="UP000000430">
    <property type="component" value="Chromosome"/>
</dbReference>
<dbReference type="GO" id="GO:0005829">
    <property type="term" value="C:cytosol"/>
    <property type="evidence" value="ECO:0007669"/>
    <property type="project" value="TreeGrafter"/>
</dbReference>
<dbReference type="GO" id="GO:0005524">
    <property type="term" value="F:ATP binding"/>
    <property type="evidence" value="ECO:0007669"/>
    <property type="project" value="UniProtKB-UniRule"/>
</dbReference>
<dbReference type="GO" id="GO:0016887">
    <property type="term" value="F:ATP hydrolysis activity"/>
    <property type="evidence" value="ECO:0007669"/>
    <property type="project" value="InterPro"/>
</dbReference>
<dbReference type="GO" id="GO:0140664">
    <property type="term" value="F:ATP-dependent DNA damage sensor activity"/>
    <property type="evidence" value="ECO:0007669"/>
    <property type="project" value="InterPro"/>
</dbReference>
<dbReference type="GO" id="GO:0003684">
    <property type="term" value="F:damaged DNA binding"/>
    <property type="evidence" value="ECO:0007669"/>
    <property type="project" value="UniProtKB-UniRule"/>
</dbReference>
<dbReference type="GO" id="GO:0003697">
    <property type="term" value="F:single-stranded DNA binding"/>
    <property type="evidence" value="ECO:0007669"/>
    <property type="project" value="UniProtKB-UniRule"/>
</dbReference>
<dbReference type="GO" id="GO:0006310">
    <property type="term" value="P:DNA recombination"/>
    <property type="evidence" value="ECO:0007669"/>
    <property type="project" value="UniProtKB-UniRule"/>
</dbReference>
<dbReference type="GO" id="GO:0006281">
    <property type="term" value="P:DNA repair"/>
    <property type="evidence" value="ECO:0007669"/>
    <property type="project" value="UniProtKB-UniRule"/>
</dbReference>
<dbReference type="GO" id="GO:0009432">
    <property type="term" value="P:SOS response"/>
    <property type="evidence" value="ECO:0007669"/>
    <property type="project" value="UniProtKB-UniRule"/>
</dbReference>
<dbReference type="CDD" id="cd00983">
    <property type="entry name" value="RecA"/>
    <property type="match status" value="1"/>
</dbReference>
<dbReference type="FunFam" id="3.40.50.300:FF:000087">
    <property type="entry name" value="Recombinase RecA"/>
    <property type="match status" value="1"/>
</dbReference>
<dbReference type="Gene3D" id="3.40.50.300">
    <property type="entry name" value="P-loop containing nucleotide triphosphate hydrolases"/>
    <property type="match status" value="1"/>
</dbReference>
<dbReference type="HAMAP" id="MF_00268">
    <property type="entry name" value="RecA"/>
    <property type="match status" value="1"/>
</dbReference>
<dbReference type="InterPro" id="IPR003593">
    <property type="entry name" value="AAA+_ATPase"/>
</dbReference>
<dbReference type="InterPro" id="IPR013765">
    <property type="entry name" value="DNA_recomb/repair_RecA"/>
</dbReference>
<dbReference type="InterPro" id="IPR020584">
    <property type="entry name" value="DNA_recomb/repair_RecA_CS"/>
</dbReference>
<dbReference type="InterPro" id="IPR027417">
    <property type="entry name" value="P-loop_NTPase"/>
</dbReference>
<dbReference type="InterPro" id="IPR049261">
    <property type="entry name" value="RecA-like_C"/>
</dbReference>
<dbReference type="InterPro" id="IPR049428">
    <property type="entry name" value="RecA-like_N"/>
</dbReference>
<dbReference type="InterPro" id="IPR020588">
    <property type="entry name" value="RecA_ATP-bd"/>
</dbReference>
<dbReference type="InterPro" id="IPR023400">
    <property type="entry name" value="RecA_C_sf"/>
</dbReference>
<dbReference type="InterPro" id="IPR020587">
    <property type="entry name" value="RecA_monomer-monomer_interface"/>
</dbReference>
<dbReference type="NCBIfam" id="TIGR02012">
    <property type="entry name" value="tigrfam_recA"/>
    <property type="match status" value="1"/>
</dbReference>
<dbReference type="PANTHER" id="PTHR45900:SF1">
    <property type="entry name" value="MITOCHONDRIAL DNA REPAIR PROTEIN RECA HOMOLOG-RELATED"/>
    <property type="match status" value="1"/>
</dbReference>
<dbReference type="PANTHER" id="PTHR45900">
    <property type="entry name" value="RECA"/>
    <property type="match status" value="1"/>
</dbReference>
<dbReference type="Pfam" id="PF00154">
    <property type="entry name" value="RecA"/>
    <property type="match status" value="1"/>
</dbReference>
<dbReference type="Pfam" id="PF21096">
    <property type="entry name" value="RecA_C"/>
    <property type="match status" value="1"/>
</dbReference>
<dbReference type="PRINTS" id="PR00142">
    <property type="entry name" value="RECA"/>
</dbReference>
<dbReference type="SMART" id="SM00382">
    <property type="entry name" value="AAA"/>
    <property type="match status" value="1"/>
</dbReference>
<dbReference type="SUPFAM" id="SSF52540">
    <property type="entry name" value="P-loop containing nucleoside triphosphate hydrolases"/>
    <property type="match status" value="1"/>
</dbReference>
<dbReference type="SUPFAM" id="SSF54752">
    <property type="entry name" value="RecA protein, C-terminal domain"/>
    <property type="match status" value="1"/>
</dbReference>
<dbReference type="PROSITE" id="PS00321">
    <property type="entry name" value="RECA_1"/>
    <property type="match status" value="1"/>
</dbReference>
<dbReference type="PROSITE" id="PS50162">
    <property type="entry name" value="RECA_2"/>
    <property type="match status" value="1"/>
</dbReference>
<dbReference type="PROSITE" id="PS50163">
    <property type="entry name" value="RECA_3"/>
    <property type="match status" value="1"/>
</dbReference>
<keyword id="KW-0067">ATP-binding</keyword>
<keyword id="KW-0963">Cytoplasm</keyword>
<keyword id="KW-0227">DNA damage</keyword>
<keyword id="KW-0233">DNA recombination</keyword>
<keyword id="KW-0234">DNA repair</keyword>
<keyword id="KW-0238">DNA-binding</keyword>
<keyword id="KW-0547">Nucleotide-binding</keyword>
<keyword id="KW-0742">SOS response</keyword>
<gene>
    <name evidence="1" type="primary">recA</name>
    <name type="ordered locus">ACIAD1385</name>
</gene>
<reference key="1">
    <citation type="journal article" date="1994" name="Mol. Microbiol.">
        <title>Properties of Acinetobacter calcoaceticus recA and its contribution to intracellular gene conversion.</title>
        <authorList>
            <person name="Gregg-Jolly L.A."/>
            <person name="Ornston L.N."/>
        </authorList>
    </citation>
    <scope>NUCLEOTIDE SEQUENCE [GENOMIC DNA]</scope>
</reference>
<reference key="2">
    <citation type="journal article" date="2004" name="Nucleic Acids Res.">
        <title>Unique features revealed by the genome sequence of Acinetobacter sp. ADP1, a versatile and naturally transformation competent bacterium.</title>
        <authorList>
            <person name="Barbe V."/>
            <person name="Vallenet D."/>
            <person name="Fonknechten N."/>
            <person name="Kreimeyer A."/>
            <person name="Oztas S."/>
            <person name="Labarre L."/>
            <person name="Cruveiller S."/>
            <person name="Robert C."/>
            <person name="Duprat S."/>
            <person name="Wincker P."/>
            <person name="Ornston L.N."/>
            <person name="Weissenbach J."/>
            <person name="Marliere P."/>
            <person name="Cohen G.N."/>
            <person name="Medigue C."/>
        </authorList>
    </citation>
    <scope>NUCLEOTIDE SEQUENCE [LARGE SCALE GENOMIC DNA]</scope>
    <source>
        <strain>ATCC 33305 / BD413 / ADP1</strain>
    </source>
</reference>
<sequence length="349" mass="37815">MDDNKSKALQAALSQIEKQFGKNTVMRLGDNTVQAVEAVSTGSLTLDIALGIGGLPKGRIVEIYGPESSGKTTMTLQAIAQCQKAGGTCAFIDAEHALDPQYARKLGVDIDNLLVSQPDHGEQALEIADMLVRSGAIDLIVVDSVAALTPKAEIEGEMGDSHMGLQARLMSQALRKITGNAKRSNCMVIFINQIRMKIGVMFGSPETTTGGNALKFYASVRLDIRRIGQVKEGDEIIGSETKVKVVKNKMAPPFREAIFQILYGKGVNQLGELVDLAVQQNIVQKAGAWYSYQGNKIGQGKNNVIRYLEENPQISTEIEAVIREQLLTKASDQTAAHDETEEEPDLLES</sequence>
<feature type="chain" id="PRO_0000122632" description="Protein RecA">
    <location>
        <begin position="1"/>
        <end position="349"/>
    </location>
</feature>
<feature type="region of interest" description="Disordered" evidence="2">
    <location>
        <begin position="329"/>
        <end position="349"/>
    </location>
</feature>
<feature type="compositionally biased region" description="Acidic residues" evidence="2">
    <location>
        <begin position="339"/>
        <end position="349"/>
    </location>
</feature>
<feature type="binding site" evidence="1">
    <location>
        <begin position="65"/>
        <end position="72"/>
    </location>
    <ligand>
        <name>ATP</name>
        <dbReference type="ChEBI" id="CHEBI:30616"/>
    </ligand>
</feature>